<sequence>MTALTQMKCEACQADAPKVTDAELAELIRMIPDWGVQVRDGIMQLERVYKFKNFKLAMAFTNKLAELAEEEFHHPGILTEWGKVTVTWWSHSIKGLHKNDFIMAAKTDQLLD</sequence>
<dbReference type="EC" id="4.2.1.96" evidence="1"/>
<dbReference type="EMBL" id="CP000444">
    <property type="protein sequence ID" value="ABI43658.1"/>
    <property type="molecule type" value="Genomic_DNA"/>
</dbReference>
<dbReference type="SMR" id="Q0HT97"/>
<dbReference type="KEGG" id="shm:Shewmr7_2673"/>
<dbReference type="HOGENOM" id="CLU_081974_2_2_6"/>
<dbReference type="GO" id="GO:0008124">
    <property type="term" value="F:4-alpha-hydroxytetrahydrobiopterin dehydratase activity"/>
    <property type="evidence" value="ECO:0007669"/>
    <property type="project" value="UniProtKB-UniRule"/>
</dbReference>
<dbReference type="GO" id="GO:0006729">
    <property type="term" value="P:tetrahydrobiopterin biosynthetic process"/>
    <property type="evidence" value="ECO:0007669"/>
    <property type="project" value="InterPro"/>
</dbReference>
<dbReference type="CDD" id="cd00913">
    <property type="entry name" value="PCD_DCoH_subfamily_a"/>
    <property type="match status" value="1"/>
</dbReference>
<dbReference type="Gene3D" id="3.30.1360.20">
    <property type="entry name" value="Transcriptional coactivator/pterin dehydratase"/>
    <property type="match status" value="1"/>
</dbReference>
<dbReference type="HAMAP" id="MF_00434">
    <property type="entry name" value="Pterin_4_alpha"/>
    <property type="match status" value="1"/>
</dbReference>
<dbReference type="InterPro" id="IPR036428">
    <property type="entry name" value="PCD_sf"/>
</dbReference>
<dbReference type="InterPro" id="IPR050376">
    <property type="entry name" value="Pterin-4-alpha-carb_dehyd"/>
</dbReference>
<dbReference type="InterPro" id="IPR001533">
    <property type="entry name" value="Pterin_deHydtase"/>
</dbReference>
<dbReference type="NCBIfam" id="NF002016">
    <property type="entry name" value="PRK00823.1-1"/>
    <property type="match status" value="1"/>
</dbReference>
<dbReference type="PANTHER" id="PTHR42805">
    <property type="entry name" value="PTERIN-4-ALPHA-CARBINOLAMINE DEHYDRATASE-RELATED"/>
    <property type="match status" value="1"/>
</dbReference>
<dbReference type="PANTHER" id="PTHR42805:SF1">
    <property type="entry name" value="PTERIN-4-ALPHA-CARBINOLAMINE DEHYDRATASE-RELATED"/>
    <property type="match status" value="1"/>
</dbReference>
<dbReference type="Pfam" id="PF01329">
    <property type="entry name" value="Pterin_4a"/>
    <property type="match status" value="1"/>
</dbReference>
<dbReference type="SUPFAM" id="SSF55248">
    <property type="entry name" value="PCD-like"/>
    <property type="match status" value="1"/>
</dbReference>
<name>PHS_SHESR</name>
<feature type="chain" id="PRO_1000050461" description="Putative pterin-4-alpha-carbinolamine dehydratase">
    <location>
        <begin position="1"/>
        <end position="112"/>
    </location>
</feature>
<comment type="catalytic activity">
    <reaction evidence="1">
        <text>(4aS,6R)-4a-hydroxy-L-erythro-5,6,7,8-tetrahydrobiopterin = (6R)-L-erythro-6,7-dihydrobiopterin + H2O</text>
        <dbReference type="Rhea" id="RHEA:11920"/>
        <dbReference type="ChEBI" id="CHEBI:15377"/>
        <dbReference type="ChEBI" id="CHEBI:15642"/>
        <dbReference type="ChEBI" id="CHEBI:43120"/>
        <dbReference type="EC" id="4.2.1.96"/>
    </reaction>
</comment>
<comment type="similarity">
    <text evidence="1">Belongs to the pterin-4-alpha-carbinolamine dehydratase family.</text>
</comment>
<proteinExistence type="inferred from homology"/>
<gene>
    <name type="ordered locus">Shewmr7_2673</name>
</gene>
<accession>Q0HT97</accession>
<reference key="1">
    <citation type="submission" date="2006-08" db="EMBL/GenBank/DDBJ databases">
        <title>Complete sequence of chromosome 1 of Shewanella sp. MR-7.</title>
        <authorList>
            <person name="Copeland A."/>
            <person name="Lucas S."/>
            <person name="Lapidus A."/>
            <person name="Barry K."/>
            <person name="Detter J.C."/>
            <person name="Glavina del Rio T."/>
            <person name="Hammon N."/>
            <person name="Israni S."/>
            <person name="Dalin E."/>
            <person name="Tice H."/>
            <person name="Pitluck S."/>
            <person name="Kiss H."/>
            <person name="Brettin T."/>
            <person name="Bruce D."/>
            <person name="Han C."/>
            <person name="Tapia R."/>
            <person name="Gilna P."/>
            <person name="Schmutz J."/>
            <person name="Larimer F."/>
            <person name="Land M."/>
            <person name="Hauser L."/>
            <person name="Kyrpides N."/>
            <person name="Mikhailova N."/>
            <person name="Nealson K."/>
            <person name="Konstantinidis K."/>
            <person name="Klappenbach J."/>
            <person name="Tiedje J."/>
            <person name="Richardson P."/>
        </authorList>
    </citation>
    <scope>NUCLEOTIDE SEQUENCE [LARGE SCALE GENOMIC DNA]</scope>
    <source>
        <strain>MR-7</strain>
    </source>
</reference>
<evidence type="ECO:0000255" key="1">
    <source>
        <dbReference type="HAMAP-Rule" id="MF_00434"/>
    </source>
</evidence>
<organism>
    <name type="scientific">Shewanella sp. (strain MR-7)</name>
    <dbReference type="NCBI Taxonomy" id="60481"/>
    <lineage>
        <taxon>Bacteria</taxon>
        <taxon>Pseudomonadati</taxon>
        <taxon>Pseudomonadota</taxon>
        <taxon>Gammaproteobacteria</taxon>
        <taxon>Alteromonadales</taxon>
        <taxon>Shewanellaceae</taxon>
        <taxon>Shewanella</taxon>
    </lineage>
</organism>
<protein>
    <recommendedName>
        <fullName evidence="1">Putative pterin-4-alpha-carbinolamine dehydratase</fullName>
        <shortName evidence="1">PHS</shortName>
        <ecNumber evidence="1">4.2.1.96</ecNumber>
    </recommendedName>
    <alternativeName>
        <fullName evidence="1">4-alpha-hydroxy-tetrahydropterin dehydratase</fullName>
    </alternativeName>
    <alternativeName>
        <fullName evidence="1">Pterin carbinolamine dehydratase</fullName>
        <shortName evidence="1">PCD</shortName>
    </alternativeName>
</protein>
<keyword id="KW-0456">Lyase</keyword>